<keyword id="KW-0067">ATP-binding</keyword>
<keyword id="KW-0963">Cytoplasm</keyword>
<keyword id="KW-0418">Kinase</keyword>
<keyword id="KW-0547">Nucleotide-binding</keyword>
<keyword id="KW-0597">Phosphoprotein</keyword>
<keyword id="KW-1185">Reference proteome</keyword>
<keyword id="KW-0723">Serine/threonine-protein kinase</keyword>
<keyword id="KW-0808">Transferase</keyword>
<evidence type="ECO:0000255" key="1">
    <source>
        <dbReference type="PROSITE-ProRule" id="PRU00159"/>
    </source>
</evidence>
<evidence type="ECO:0000255" key="2">
    <source>
        <dbReference type="PROSITE-ProRule" id="PRU10027"/>
    </source>
</evidence>
<evidence type="ECO:0000269" key="3">
    <source>
    </source>
</evidence>
<evidence type="ECO:0000305" key="4"/>
<organism>
    <name type="scientific">Schizosaccharomyces pombe (strain 972 / ATCC 24843)</name>
    <name type="common">Fission yeast</name>
    <dbReference type="NCBI Taxonomy" id="284812"/>
    <lineage>
        <taxon>Eukaryota</taxon>
        <taxon>Fungi</taxon>
        <taxon>Dikarya</taxon>
        <taxon>Ascomycota</taxon>
        <taxon>Taphrinomycotina</taxon>
        <taxon>Schizosaccharomycetes</taxon>
        <taxon>Schizosaccharomycetales</taxon>
        <taxon>Schizosaccharomycetaceae</taxon>
        <taxon>Schizosaccharomyces</taxon>
    </lineage>
</organism>
<gene>
    <name type="primary">cki2</name>
    <name type="ORF">SPBP35G2.05c</name>
</gene>
<name>CKI2_SCHPO</name>
<accession>P40234</accession>
<accession>Q9P798</accession>
<comment type="function">
    <text>Casein kinases are operationally defined by their preferential utilization of acidic proteins such as caseins as substrates. May contribute to the regulation of morphology.</text>
</comment>
<comment type="catalytic activity">
    <reaction>
        <text>L-seryl-[protein] + ATP = O-phospho-L-seryl-[protein] + ADP + H(+)</text>
        <dbReference type="Rhea" id="RHEA:17989"/>
        <dbReference type="Rhea" id="RHEA-COMP:9863"/>
        <dbReference type="Rhea" id="RHEA-COMP:11604"/>
        <dbReference type="ChEBI" id="CHEBI:15378"/>
        <dbReference type="ChEBI" id="CHEBI:29999"/>
        <dbReference type="ChEBI" id="CHEBI:30616"/>
        <dbReference type="ChEBI" id="CHEBI:83421"/>
        <dbReference type="ChEBI" id="CHEBI:456216"/>
        <dbReference type="EC" id="2.7.11.1"/>
    </reaction>
</comment>
<comment type="catalytic activity">
    <reaction>
        <text>L-threonyl-[protein] + ATP = O-phospho-L-threonyl-[protein] + ADP + H(+)</text>
        <dbReference type="Rhea" id="RHEA:46608"/>
        <dbReference type="Rhea" id="RHEA-COMP:11060"/>
        <dbReference type="Rhea" id="RHEA-COMP:11605"/>
        <dbReference type="ChEBI" id="CHEBI:15378"/>
        <dbReference type="ChEBI" id="CHEBI:30013"/>
        <dbReference type="ChEBI" id="CHEBI:30616"/>
        <dbReference type="ChEBI" id="CHEBI:61977"/>
        <dbReference type="ChEBI" id="CHEBI:456216"/>
        <dbReference type="EC" id="2.7.11.1"/>
    </reaction>
</comment>
<comment type="subcellular location">
    <subcellularLocation>
        <location>Cytoplasm</location>
    </subcellularLocation>
</comment>
<comment type="similarity">
    <text evidence="4">Belongs to the protein kinase superfamily. CK1 Ser/Thr protein kinase family. Casein kinase I subfamily.</text>
</comment>
<feature type="chain" id="PRO_0000192862" description="Casein kinase I homolog 2">
    <location>
        <begin position="1"/>
        <end position="435"/>
    </location>
</feature>
<feature type="domain" description="Protein kinase" evidence="1">
    <location>
        <begin position="12"/>
        <end position="282"/>
    </location>
</feature>
<feature type="active site" description="Proton acceptor" evidence="1 2">
    <location>
        <position position="131"/>
    </location>
</feature>
<feature type="binding site" evidence="1">
    <location>
        <begin position="18"/>
        <end position="26"/>
    </location>
    <ligand>
        <name>ATP</name>
        <dbReference type="ChEBI" id="CHEBI:30616"/>
    </ligand>
</feature>
<feature type="binding site" evidence="1">
    <location>
        <position position="41"/>
    </location>
    <ligand>
        <name>ATP</name>
        <dbReference type="ChEBI" id="CHEBI:30616"/>
    </ligand>
</feature>
<feature type="modified residue" description="Phosphoserine" evidence="3">
    <location>
        <position position="361"/>
    </location>
</feature>
<feature type="sequence conflict" description="In Ref. 1; AAA19020." evidence="4" ref="1">
    <original>H</original>
    <variation>Y</variation>
    <location>
        <position position="169"/>
    </location>
</feature>
<proteinExistence type="evidence at protein level"/>
<reference key="1">
    <citation type="journal article" date="1994" name="J. Biol. Chem.">
        <title>Cytoplasmic forms of fission yeast casein kinase-1 associate primarily with the particulate fraction of the cell.</title>
        <authorList>
            <person name="Wang P.-C."/>
            <person name="Vancura A."/>
            <person name="Desai A."/>
            <person name="Carmel G."/>
            <person name="Kuret J."/>
        </authorList>
    </citation>
    <scope>NUCLEOTIDE SEQUENCE [GENOMIC DNA]</scope>
    <source>
        <strain>SP66</strain>
    </source>
</reference>
<reference key="2">
    <citation type="journal article" date="2002" name="Nature">
        <title>The genome sequence of Schizosaccharomyces pombe.</title>
        <authorList>
            <person name="Wood V."/>
            <person name="Gwilliam R."/>
            <person name="Rajandream M.A."/>
            <person name="Lyne M.H."/>
            <person name="Lyne R."/>
            <person name="Stewart A."/>
            <person name="Sgouros J.G."/>
            <person name="Peat N."/>
            <person name="Hayles J."/>
            <person name="Baker S.G."/>
            <person name="Basham D."/>
            <person name="Bowman S."/>
            <person name="Brooks K."/>
            <person name="Brown D."/>
            <person name="Brown S."/>
            <person name="Chillingworth T."/>
            <person name="Churcher C.M."/>
            <person name="Collins M."/>
            <person name="Connor R."/>
            <person name="Cronin A."/>
            <person name="Davis P."/>
            <person name="Feltwell T."/>
            <person name="Fraser A."/>
            <person name="Gentles S."/>
            <person name="Goble A."/>
            <person name="Hamlin N."/>
            <person name="Harris D.E."/>
            <person name="Hidalgo J."/>
            <person name="Hodgson G."/>
            <person name="Holroyd S."/>
            <person name="Hornsby T."/>
            <person name="Howarth S."/>
            <person name="Huckle E.J."/>
            <person name="Hunt S."/>
            <person name="Jagels K."/>
            <person name="James K.D."/>
            <person name="Jones L."/>
            <person name="Jones M."/>
            <person name="Leather S."/>
            <person name="McDonald S."/>
            <person name="McLean J."/>
            <person name="Mooney P."/>
            <person name="Moule S."/>
            <person name="Mungall K.L."/>
            <person name="Murphy L.D."/>
            <person name="Niblett D."/>
            <person name="Odell C."/>
            <person name="Oliver K."/>
            <person name="O'Neil S."/>
            <person name="Pearson D."/>
            <person name="Quail M.A."/>
            <person name="Rabbinowitsch E."/>
            <person name="Rutherford K.M."/>
            <person name="Rutter S."/>
            <person name="Saunders D."/>
            <person name="Seeger K."/>
            <person name="Sharp S."/>
            <person name="Skelton J."/>
            <person name="Simmonds M.N."/>
            <person name="Squares R."/>
            <person name="Squares S."/>
            <person name="Stevens K."/>
            <person name="Taylor K."/>
            <person name="Taylor R.G."/>
            <person name="Tivey A."/>
            <person name="Walsh S.V."/>
            <person name="Warren T."/>
            <person name="Whitehead S."/>
            <person name="Woodward J.R."/>
            <person name="Volckaert G."/>
            <person name="Aert R."/>
            <person name="Robben J."/>
            <person name="Grymonprez B."/>
            <person name="Weltjens I."/>
            <person name="Vanstreels E."/>
            <person name="Rieger M."/>
            <person name="Schaefer M."/>
            <person name="Mueller-Auer S."/>
            <person name="Gabel C."/>
            <person name="Fuchs M."/>
            <person name="Duesterhoeft A."/>
            <person name="Fritzc C."/>
            <person name="Holzer E."/>
            <person name="Moestl D."/>
            <person name="Hilbert H."/>
            <person name="Borzym K."/>
            <person name="Langer I."/>
            <person name="Beck A."/>
            <person name="Lehrach H."/>
            <person name="Reinhardt R."/>
            <person name="Pohl T.M."/>
            <person name="Eger P."/>
            <person name="Zimmermann W."/>
            <person name="Wedler H."/>
            <person name="Wambutt R."/>
            <person name="Purnelle B."/>
            <person name="Goffeau A."/>
            <person name="Cadieu E."/>
            <person name="Dreano S."/>
            <person name="Gloux S."/>
            <person name="Lelaure V."/>
            <person name="Mottier S."/>
            <person name="Galibert F."/>
            <person name="Aves S.J."/>
            <person name="Xiang Z."/>
            <person name="Hunt C."/>
            <person name="Moore K."/>
            <person name="Hurst S.M."/>
            <person name="Lucas M."/>
            <person name="Rochet M."/>
            <person name="Gaillardin C."/>
            <person name="Tallada V.A."/>
            <person name="Garzon A."/>
            <person name="Thode G."/>
            <person name="Daga R.R."/>
            <person name="Cruzado L."/>
            <person name="Jimenez J."/>
            <person name="Sanchez M."/>
            <person name="del Rey F."/>
            <person name="Benito J."/>
            <person name="Dominguez A."/>
            <person name="Revuelta J.L."/>
            <person name="Moreno S."/>
            <person name="Armstrong J."/>
            <person name="Forsburg S.L."/>
            <person name="Cerutti L."/>
            <person name="Lowe T."/>
            <person name="McCombie W.R."/>
            <person name="Paulsen I."/>
            <person name="Potashkin J."/>
            <person name="Shpakovski G.V."/>
            <person name="Ussery D."/>
            <person name="Barrell B.G."/>
            <person name="Nurse P."/>
        </authorList>
    </citation>
    <scope>NUCLEOTIDE SEQUENCE [LARGE SCALE GENOMIC DNA]</scope>
    <source>
        <strain>972 / ATCC 24843</strain>
    </source>
</reference>
<reference key="3">
    <citation type="journal article" date="2008" name="J. Proteome Res.">
        <title>Phosphoproteome analysis of fission yeast.</title>
        <authorList>
            <person name="Wilson-Grady J.T."/>
            <person name="Villen J."/>
            <person name="Gygi S.P."/>
        </authorList>
    </citation>
    <scope>PHOSPHORYLATION [LARGE SCALE ANALYSIS] AT SER-361</scope>
    <scope>IDENTIFICATION BY MASS SPECTROMETRY</scope>
</reference>
<sequence>MNSQTSVVGVHYRVGRKIGEGSFGVIFDGMNLLNNQLIAIKFEPKKSEAPQLRDEYRTYKLLVGNAGIPNVYYFGQEGLHNILVIDLLGPSLEDLFEWCGRRFSVKTVAMTAKQMLSRVQTIHEKNLVYRDIKPDNFLIGRPSSRNANMVYMVDFGMAKYYRDPKTKQHIPYSERKSLSGTARYMSINTHLGREQSRRDDLESLGHVFMYFLRGSLPWQGLKAANNKHKYEKISEKKQSTSISELCAGFPNEFSKYMTYVRSLEFDEEPDYAFLQELFDDVLRANGDTNDGVYDWMLLNDGKGWESSSSHFSVVAMKRRKNYLGLNVVQNDDSRKKNSTLQTQNMRFKSSYGVRGPRNYSSFDALPSKNAPLVRQEQSASKKTIYAHSSRGYDRVRPMYVSQPSNNAVGVNHPNDNSDSEAKGGFFDMICCRCFS</sequence>
<protein>
    <recommendedName>
        <fullName>Casein kinase I homolog 2</fullName>
        <ecNumber>2.7.11.1</ecNumber>
    </recommendedName>
</protein>
<dbReference type="EC" id="2.7.11.1"/>
<dbReference type="EMBL" id="U06930">
    <property type="protein sequence ID" value="AAA19020.1"/>
    <property type="molecule type" value="Genomic_DNA"/>
</dbReference>
<dbReference type="EMBL" id="CU329671">
    <property type="protein sequence ID" value="CAB87367.1"/>
    <property type="molecule type" value="Genomic_DNA"/>
</dbReference>
<dbReference type="PIR" id="B53581">
    <property type="entry name" value="B53581"/>
</dbReference>
<dbReference type="RefSeq" id="NP_595380.1">
    <property type="nucleotide sequence ID" value="NM_001021287.2"/>
</dbReference>
<dbReference type="SMR" id="P40234"/>
<dbReference type="BioGRID" id="277852">
    <property type="interactions" value="3"/>
</dbReference>
<dbReference type="FunCoup" id="P40234">
    <property type="interactions" value="499"/>
</dbReference>
<dbReference type="STRING" id="284812.P40234"/>
<dbReference type="iPTMnet" id="P40234"/>
<dbReference type="PaxDb" id="4896-SPBP35G2.05c.1"/>
<dbReference type="EnsemblFungi" id="SPBP35G2.05c.1">
    <property type="protein sequence ID" value="SPBP35G2.05c.1:pep"/>
    <property type="gene ID" value="SPBP35G2.05c"/>
</dbReference>
<dbReference type="GeneID" id="2541341"/>
<dbReference type="KEGG" id="spo:2541341"/>
<dbReference type="PomBase" id="SPBP35G2.05c">
    <property type="gene designation" value="cki2"/>
</dbReference>
<dbReference type="VEuPathDB" id="FungiDB:SPBP35G2.05c"/>
<dbReference type="eggNOG" id="KOG1165">
    <property type="taxonomic scope" value="Eukaryota"/>
</dbReference>
<dbReference type="HOGENOM" id="CLU_019279_2_0_1"/>
<dbReference type="InParanoid" id="P40234"/>
<dbReference type="OMA" id="YMTYVRS"/>
<dbReference type="PhylomeDB" id="P40234"/>
<dbReference type="BRENDA" id="2.7.11.1">
    <property type="organism ID" value="5613"/>
</dbReference>
<dbReference type="PRO" id="PR:P40234"/>
<dbReference type="Proteomes" id="UP000002485">
    <property type="component" value="Chromosome II"/>
</dbReference>
<dbReference type="GO" id="GO:0005737">
    <property type="term" value="C:cytoplasm"/>
    <property type="evidence" value="ECO:0000314"/>
    <property type="project" value="PomBase"/>
</dbReference>
<dbReference type="GO" id="GO:0000329">
    <property type="term" value="C:fungal-type vacuole membrane"/>
    <property type="evidence" value="ECO:0000314"/>
    <property type="project" value="PomBase"/>
</dbReference>
<dbReference type="GO" id="GO:0005634">
    <property type="term" value="C:nucleus"/>
    <property type="evidence" value="ECO:0000318"/>
    <property type="project" value="GO_Central"/>
</dbReference>
<dbReference type="GO" id="GO:0005524">
    <property type="term" value="F:ATP binding"/>
    <property type="evidence" value="ECO:0007669"/>
    <property type="project" value="UniProtKB-KW"/>
</dbReference>
<dbReference type="GO" id="GO:0106310">
    <property type="term" value="F:protein serine kinase activity"/>
    <property type="evidence" value="ECO:0007669"/>
    <property type="project" value="RHEA"/>
</dbReference>
<dbReference type="GO" id="GO:0004674">
    <property type="term" value="F:protein serine/threonine kinase activity"/>
    <property type="evidence" value="ECO:0000315"/>
    <property type="project" value="PomBase"/>
</dbReference>
<dbReference type="GO" id="GO:0006897">
    <property type="term" value="P:endocytosis"/>
    <property type="evidence" value="ECO:0000318"/>
    <property type="project" value="GO_Central"/>
</dbReference>
<dbReference type="GO" id="GO:0030100">
    <property type="term" value="P:regulation of endocytosis"/>
    <property type="evidence" value="ECO:0000266"/>
    <property type="project" value="PomBase"/>
</dbReference>
<dbReference type="GO" id="GO:0007165">
    <property type="term" value="P:signal transduction"/>
    <property type="evidence" value="ECO:0000318"/>
    <property type="project" value="GO_Central"/>
</dbReference>
<dbReference type="CDD" id="cd14127">
    <property type="entry name" value="STKc_CK1_fungal"/>
    <property type="match status" value="1"/>
</dbReference>
<dbReference type="FunFam" id="1.10.510.10:FF:000160">
    <property type="entry name" value="Casein kinase I 1"/>
    <property type="match status" value="1"/>
</dbReference>
<dbReference type="FunFam" id="3.30.200.20:FF:000538">
    <property type="entry name" value="Putative Casein kinase I"/>
    <property type="match status" value="1"/>
</dbReference>
<dbReference type="Gene3D" id="1.10.510.10">
    <property type="entry name" value="Transferase(Phosphotransferase) domain 1"/>
    <property type="match status" value="1"/>
</dbReference>
<dbReference type="InterPro" id="IPR050235">
    <property type="entry name" value="CK1_Ser-Thr_kinase"/>
</dbReference>
<dbReference type="InterPro" id="IPR011009">
    <property type="entry name" value="Kinase-like_dom_sf"/>
</dbReference>
<dbReference type="InterPro" id="IPR000719">
    <property type="entry name" value="Prot_kinase_dom"/>
</dbReference>
<dbReference type="InterPro" id="IPR017441">
    <property type="entry name" value="Protein_kinase_ATP_BS"/>
</dbReference>
<dbReference type="InterPro" id="IPR008271">
    <property type="entry name" value="Ser/Thr_kinase_AS"/>
</dbReference>
<dbReference type="PANTHER" id="PTHR11909">
    <property type="entry name" value="CASEIN KINASE-RELATED"/>
    <property type="match status" value="1"/>
</dbReference>
<dbReference type="Pfam" id="PF00069">
    <property type="entry name" value="Pkinase"/>
    <property type="match status" value="1"/>
</dbReference>
<dbReference type="SMART" id="SM00220">
    <property type="entry name" value="S_TKc"/>
    <property type="match status" value="1"/>
</dbReference>
<dbReference type="SUPFAM" id="SSF56112">
    <property type="entry name" value="Protein kinase-like (PK-like)"/>
    <property type="match status" value="1"/>
</dbReference>
<dbReference type="PROSITE" id="PS00107">
    <property type="entry name" value="PROTEIN_KINASE_ATP"/>
    <property type="match status" value="1"/>
</dbReference>
<dbReference type="PROSITE" id="PS50011">
    <property type="entry name" value="PROTEIN_KINASE_DOM"/>
    <property type="match status" value="1"/>
</dbReference>
<dbReference type="PROSITE" id="PS00108">
    <property type="entry name" value="PROTEIN_KINASE_ST"/>
    <property type="match status" value="1"/>
</dbReference>